<protein>
    <recommendedName>
        <fullName>Photosystem I reaction center subunit II</fullName>
    </recommendedName>
</protein>
<dbReference type="EMBL" id="BA000045">
    <property type="protein sequence ID" value="BAC91642.1"/>
    <property type="molecule type" value="Genomic_DNA"/>
</dbReference>
<dbReference type="RefSeq" id="NP_926647.1">
    <property type="nucleotide sequence ID" value="NC_005125.1"/>
</dbReference>
<dbReference type="RefSeq" id="WP_011143690.1">
    <property type="nucleotide sequence ID" value="NC_005125.1"/>
</dbReference>
<dbReference type="PDB" id="7F4V">
    <property type="method" value="EM"/>
    <property type="resolution" value="2.04 A"/>
    <property type="chains" value="aD/bD/cD=1-144"/>
</dbReference>
<dbReference type="PDBsum" id="7F4V"/>
<dbReference type="EMDB" id="EMD-31455"/>
<dbReference type="SMR" id="Q7NF26"/>
<dbReference type="STRING" id="251221.gene:10761217"/>
<dbReference type="EnsemblBacteria" id="BAC91642">
    <property type="protein sequence ID" value="BAC91642"/>
    <property type="gene ID" value="BAC91642"/>
</dbReference>
<dbReference type="KEGG" id="gvi:glr3701"/>
<dbReference type="PATRIC" id="fig|251221.4.peg.3734"/>
<dbReference type="eggNOG" id="ENOG502ZBN6">
    <property type="taxonomic scope" value="Bacteria"/>
</dbReference>
<dbReference type="HOGENOM" id="CLU_150527_0_0_3"/>
<dbReference type="InParanoid" id="Q7NF26"/>
<dbReference type="OrthoDB" id="457155at2"/>
<dbReference type="PhylomeDB" id="Q7NF26"/>
<dbReference type="Proteomes" id="UP000000557">
    <property type="component" value="Chromosome"/>
</dbReference>
<dbReference type="GO" id="GO:0009538">
    <property type="term" value="C:photosystem I reaction center"/>
    <property type="evidence" value="ECO:0007669"/>
    <property type="project" value="InterPro"/>
</dbReference>
<dbReference type="GO" id="GO:0005886">
    <property type="term" value="C:plasma membrane"/>
    <property type="evidence" value="ECO:0007669"/>
    <property type="project" value="UniProtKB-SubCell"/>
</dbReference>
<dbReference type="GO" id="GO:0015979">
    <property type="term" value="P:photosynthesis"/>
    <property type="evidence" value="ECO:0007669"/>
    <property type="project" value="UniProtKB-KW"/>
</dbReference>
<dbReference type="Gene3D" id="3.30.1470.10">
    <property type="entry name" value="Photosystem I PsaD, reaction center subunit II"/>
    <property type="match status" value="1"/>
</dbReference>
<dbReference type="InterPro" id="IPR003685">
    <property type="entry name" value="PsaD"/>
</dbReference>
<dbReference type="InterPro" id="IPR036579">
    <property type="entry name" value="PsaD_sf"/>
</dbReference>
<dbReference type="PANTHER" id="PTHR31982:SF5">
    <property type="entry name" value="PHOTOSYSTEM I REACTION CENTER SUBUNIT II, CHLOROPLASTIC"/>
    <property type="match status" value="1"/>
</dbReference>
<dbReference type="PANTHER" id="PTHR31982">
    <property type="entry name" value="PHOTOSYSTEM I REACTION CENTER SUBUNIT II-1, CHLOROPLASTIC-RELATED"/>
    <property type="match status" value="1"/>
</dbReference>
<dbReference type="Pfam" id="PF02531">
    <property type="entry name" value="PsaD"/>
    <property type="match status" value="1"/>
</dbReference>
<dbReference type="SUPFAM" id="SSF64234">
    <property type="entry name" value="Photosystem I subunit PsaD"/>
    <property type="match status" value="1"/>
</dbReference>
<organism>
    <name type="scientific">Gloeobacter violaceus (strain ATCC 29082 / PCC 7421)</name>
    <dbReference type="NCBI Taxonomy" id="251221"/>
    <lineage>
        <taxon>Bacteria</taxon>
        <taxon>Bacillati</taxon>
        <taxon>Cyanobacteriota</taxon>
        <taxon>Cyanophyceae</taxon>
        <taxon>Gloeobacterales</taxon>
        <taxon>Gloeobacteraceae</taxon>
        <taxon>Gloeobacter</taxon>
    </lineage>
</organism>
<name>PSAD_GLOVI</name>
<proteinExistence type="evidence at protein level"/>
<sequence>MADVKELPFGGSTPLFGGSTGGLLRKAQIEEKYLIVWNSKEEQVFEMPTGGAATMVAGTNVLYLARKEQCHALHRQLVSTFKIRDSKIYRVYPNGEQVLIFPMDGVPSEKSNPGREVVGYVPRKIGDNPNPVDVKFTGKETFDV</sequence>
<feature type="chain" id="PRO_0000206043" description="Photosystem I reaction center subunit II">
    <location>
        <begin position="1"/>
        <end position="144"/>
    </location>
</feature>
<gene>
    <name type="primary">psaD</name>
    <name type="ordered locus">glr3701</name>
</gene>
<reference key="1">
    <citation type="journal article" date="2003" name="DNA Res.">
        <title>Complete genome structure of Gloeobacter violaceus PCC 7421, a cyanobacterium that lacks thylakoids.</title>
        <authorList>
            <person name="Nakamura Y."/>
            <person name="Kaneko T."/>
            <person name="Sato S."/>
            <person name="Mimuro M."/>
            <person name="Miyashita H."/>
            <person name="Tsuchiya T."/>
            <person name="Sasamoto S."/>
            <person name="Watanabe A."/>
            <person name="Kawashima K."/>
            <person name="Kishida Y."/>
            <person name="Kiyokawa C."/>
            <person name="Kohara M."/>
            <person name="Matsumoto M."/>
            <person name="Matsuno A."/>
            <person name="Nakazaki N."/>
            <person name="Shimpo S."/>
            <person name="Takeuchi C."/>
            <person name="Yamada M."/>
            <person name="Tabata S."/>
        </authorList>
    </citation>
    <scope>NUCLEOTIDE SEQUENCE [LARGE SCALE GENOMIC DNA]</scope>
    <source>
        <strain>ATCC 29082 / PCC 7421</strain>
    </source>
</reference>
<reference key="2">
    <citation type="journal article" date="2004" name="FEBS Lett.">
        <title>Unique constitution of photosystem I with a novel subunit in the cyanobacterium Gloeobacter violaceus PCC 7421.</title>
        <authorList>
            <person name="Inoue H."/>
            <person name="Tsuchiya T."/>
            <person name="Satoh S."/>
            <person name="Miyashita H."/>
            <person name="Kaneko T."/>
            <person name="Tabata S."/>
            <person name="Tanaka A."/>
            <person name="Mimuro M."/>
        </authorList>
    </citation>
    <scope>IDENTIFICATION BY MASS SPECTROMETRY</scope>
    <scope>CHARACTERIZATION OF PHOTOSYSTEM I</scope>
    <source>
        <strain>ATCC 29082 / PCC 7421</strain>
    </source>
</reference>
<keyword id="KW-0002">3D-structure</keyword>
<keyword id="KW-0997">Cell inner membrane</keyword>
<keyword id="KW-1003">Cell membrane</keyword>
<keyword id="KW-0472">Membrane</keyword>
<keyword id="KW-0602">Photosynthesis</keyword>
<keyword id="KW-0603">Photosystem I</keyword>
<keyword id="KW-1185">Reference proteome</keyword>
<comment type="function">
    <text>PsaD can form complexes with ferredoxin and ferredoxin-oxidoreductase in photosystem I (PS I) reaction center.</text>
</comment>
<comment type="subunit">
    <text>The G.violaceus PSI reaction center is composed of one copy each of PsaA,B,C,D,E,F,L,M and Z, and forms trimeric complexes.</text>
</comment>
<comment type="subcellular location">
    <subcellularLocation>
        <location>Cell inner membrane</location>
        <topology>Peripheral membrane protein</topology>
        <orientation>Cytoplasmic side</orientation>
    </subcellularLocation>
</comment>
<comment type="similarity">
    <text evidence="1">Belongs to the PsaD family.</text>
</comment>
<accession>Q7NF26</accession>
<evidence type="ECO:0000305" key="1"/>